<gene>
    <name type="primary">CRYZ</name>
</gene>
<reference key="1">
    <citation type="journal article" date="1995" name="Mol. Biol. Evol.">
        <title>Evidence for independent recruitment of zeta-crystallin/quinone reductase (CRYZ) as a crystallin in camelids and hystricomorph rodents.</title>
        <authorList>
            <person name="Gonzalez P."/>
            <person name="Rao P.V."/>
            <person name="Nunez S.B."/>
            <person name="Zigler J.S. Jr."/>
        </authorList>
    </citation>
    <scope>NUCLEOTIDE SEQUENCE [MRNA]</scope>
    <source>
        <tissue>Lens</tissue>
    </source>
</reference>
<organism>
    <name type="scientific">Lama guanicoe</name>
    <name type="common">Guanaco</name>
    <name type="synonym">Lama glama guanicoe</name>
    <dbReference type="NCBI Taxonomy" id="9840"/>
    <lineage>
        <taxon>Eukaryota</taxon>
        <taxon>Metazoa</taxon>
        <taxon>Chordata</taxon>
        <taxon>Craniata</taxon>
        <taxon>Vertebrata</taxon>
        <taxon>Euteleostomi</taxon>
        <taxon>Mammalia</taxon>
        <taxon>Eutheria</taxon>
        <taxon>Laurasiatheria</taxon>
        <taxon>Artiodactyla</taxon>
        <taxon>Tylopoda</taxon>
        <taxon>Camelidae</taxon>
        <taxon>Lama</taxon>
    </lineage>
</organism>
<evidence type="ECO:0000250" key="1"/>
<evidence type="ECO:0000250" key="2">
    <source>
        <dbReference type="UniProtKB" id="Q08257"/>
    </source>
</evidence>
<evidence type="ECO:0000305" key="3"/>
<comment type="function">
    <text evidence="1">Does not have alcohol dehydrogenase activity. Binds NADP and acts through a one-electron transfer process. Orthoquinones, such as 1,2-naphthoquinone or 9,10-phenanthrenequinone, are the best substrates (in vitro). May act in the detoxification of xenobiotics. Interacts with (AU)-rich elements (ARE) in the 3'-UTR of target mRNA species and enhances their stability. NADPH binding interferes with mRNA binding (By similarity).</text>
</comment>
<comment type="catalytic activity">
    <reaction>
        <text>2 a quinone + NADPH + H(+) = 2 a 1,4-benzosemiquinone + NADP(+)</text>
        <dbReference type="Rhea" id="RHEA:14269"/>
        <dbReference type="ChEBI" id="CHEBI:15378"/>
        <dbReference type="ChEBI" id="CHEBI:57783"/>
        <dbReference type="ChEBI" id="CHEBI:58349"/>
        <dbReference type="ChEBI" id="CHEBI:132124"/>
        <dbReference type="ChEBI" id="CHEBI:134225"/>
        <dbReference type="EC" id="1.6.5.5"/>
    </reaction>
</comment>
<comment type="subunit">
    <text evidence="1">Homotetramer.</text>
</comment>
<comment type="subcellular location">
    <subcellularLocation>
        <location>Cytoplasm</location>
    </subcellularLocation>
</comment>
<comment type="similarity">
    <text evidence="3">Belongs to the zinc-containing alcohol dehydrogenase family. Quinone oxidoreductase subfamily.</text>
</comment>
<protein>
    <recommendedName>
        <fullName>Quinone oxidoreductase</fullName>
        <ecNumber>1.6.5.5</ecNumber>
    </recommendedName>
    <alternativeName>
        <fullName>NADPH:quinone reductase</fullName>
    </alternativeName>
    <alternativeName>
        <fullName>Zeta-crystallin</fullName>
    </alternativeName>
</protein>
<proteinExistence type="evidence at transcript level"/>
<sequence>MATGQRLMRAIRVSEFGGPEVLKLQSDVAVPIPEEHQVLIKVQACGVNPVDTYIRSGTYSRKPRLPYTPGLDVAGLIEAVGERVSAFKKGDRVFTTSTVSGGYAEYALAADHTVYKLPGELDFQKGAAIGVPYFTAYRALLHSACAKAGESVLVHGASGGVGLAACQIARACCFKVLGTAGTEEGQRVVLQNGAHEVFNHREDINIDKIKKSVGEKGIDVIIEMLANVNLSNDLNLLSQGGRVIIVGSKGPVEINPRDTMTKESSIKGVTLFSSTKEEFQQFAAALQAGMEIGWLRPVIGSQYPLEKVAQAHEDLTHSSGAAGKVVLLLK</sequence>
<accession>Q28452</accession>
<name>QOR_LAMGU</name>
<feature type="initiator methionine" description="Removed" evidence="2">
    <location>
        <position position="1"/>
    </location>
</feature>
<feature type="chain" id="PRO_0000160907" description="Quinone oxidoreductase">
    <location>
        <begin position="2"/>
        <end position="330"/>
    </location>
</feature>
<feature type="binding site" evidence="1">
    <location>
        <position position="53"/>
    </location>
    <ligand>
        <name>NADP(+)</name>
        <dbReference type="ChEBI" id="CHEBI:58349"/>
    </ligand>
</feature>
<feature type="binding site" evidence="1">
    <location>
        <begin position="158"/>
        <end position="161"/>
    </location>
    <ligand>
        <name>NADP(+)</name>
        <dbReference type="ChEBI" id="CHEBI:58349"/>
    </ligand>
</feature>
<feature type="binding site" evidence="1">
    <location>
        <position position="181"/>
    </location>
    <ligand>
        <name>NADP(+)</name>
        <dbReference type="ChEBI" id="CHEBI:58349"/>
    </ligand>
</feature>
<feature type="binding site" evidence="1">
    <location>
        <position position="200"/>
    </location>
    <ligand>
        <name>NADP(+)</name>
        <dbReference type="ChEBI" id="CHEBI:58349"/>
    </ligand>
</feature>
<feature type="binding site" evidence="1">
    <location>
        <position position="229"/>
    </location>
    <ligand>
        <name>NADP(+)</name>
        <dbReference type="ChEBI" id="CHEBI:58349"/>
    </ligand>
</feature>
<feature type="binding site" evidence="1">
    <location>
        <begin position="246"/>
        <end position="249"/>
    </location>
    <ligand>
        <name>NADP(+)</name>
        <dbReference type="ChEBI" id="CHEBI:58349"/>
    </ligand>
</feature>
<feature type="binding site" evidence="1">
    <location>
        <begin position="269"/>
        <end position="271"/>
    </location>
    <ligand>
        <name>NADP(+)</name>
        <dbReference type="ChEBI" id="CHEBI:58349"/>
    </ligand>
</feature>
<feature type="modified residue" description="N-acetylalanine" evidence="2">
    <location>
        <position position="2"/>
    </location>
</feature>
<feature type="modified residue" description="N6-acetyllysine" evidence="2">
    <location>
        <position position="23"/>
    </location>
</feature>
<feature type="modified residue" description="Phosphoserine" evidence="2">
    <location>
        <position position="248"/>
    </location>
</feature>
<keyword id="KW-0007">Acetylation</keyword>
<keyword id="KW-0963">Cytoplasm</keyword>
<keyword id="KW-0521">NADP</keyword>
<keyword id="KW-0560">Oxidoreductase</keyword>
<keyword id="KW-0597">Phosphoprotein</keyword>
<keyword id="KW-0694">RNA-binding</keyword>
<dbReference type="EC" id="1.6.5.5"/>
<dbReference type="EMBL" id="L34159">
    <property type="protein sequence ID" value="AAA99986.1"/>
    <property type="molecule type" value="mRNA"/>
</dbReference>
<dbReference type="SMR" id="Q28452"/>
<dbReference type="GO" id="GO:0005829">
    <property type="term" value="C:cytosol"/>
    <property type="evidence" value="ECO:0000250"/>
    <property type="project" value="UniProtKB"/>
</dbReference>
<dbReference type="GO" id="GO:0003730">
    <property type="term" value="F:mRNA 3'-UTR binding"/>
    <property type="evidence" value="ECO:0000250"/>
    <property type="project" value="UniProtKB"/>
</dbReference>
<dbReference type="GO" id="GO:0070402">
    <property type="term" value="F:NADPH binding"/>
    <property type="evidence" value="ECO:0000250"/>
    <property type="project" value="UniProtKB"/>
</dbReference>
<dbReference type="GO" id="GO:0003960">
    <property type="term" value="F:NADPH:quinone reductase activity"/>
    <property type="evidence" value="ECO:0000250"/>
    <property type="project" value="UniProtKB"/>
</dbReference>
<dbReference type="GO" id="GO:0008270">
    <property type="term" value="F:zinc ion binding"/>
    <property type="evidence" value="ECO:0007669"/>
    <property type="project" value="InterPro"/>
</dbReference>
<dbReference type="GO" id="GO:0042178">
    <property type="term" value="P:xenobiotic catabolic process"/>
    <property type="evidence" value="ECO:0000250"/>
    <property type="project" value="UniProtKB"/>
</dbReference>
<dbReference type="CDD" id="cd08253">
    <property type="entry name" value="zeta_crystallin"/>
    <property type="match status" value="1"/>
</dbReference>
<dbReference type="FunFam" id="3.90.180.10:FF:000016">
    <property type="entry name" value="Quinone oxidoreductase"/>
    <property type="match status" value="1"/>
</dbReference>
<dbReference type="FunFam" id="3.40.50.720:FF:000244">
    <property type="entry name" value="quinone oxidoreductase"/>
    <property type="match status" value="1"/>
</dbReference>
<dbReference type="Gene3D" id="3.90.180.10">
    <property type="entry name" value="Medium-chain alcohol dehydrogenases, catalytic domain"/>
    <property type="match status" value="1"/>
</dbReference>
<dbReference type="Gene3D" id="3.40.50.720">
    <property type="entry name" value="NAD(P)-binding Rossmann-like Domain"/>
    <property type="match status" value="1"/>
</dbReference>
<dbReference type="InterPro" id="IPR013149">
    <property type="entry name" value="ADH-like_C"/>
</dbReference>
<dbReference type="InterPro" id="IPR013154">
    <property type="entry name" value="ADH-like_N"/>
</dbReference>
<dbReference type="InterPro" id="IPR011032">
    <property type="entry name" value="GroES-like_sf"/>
</dbReference>
<dbReference type="InterPro" id="IPR036291">
    <property type="entry name" value="NAD(P)-bd_dom_sf"/>
</dbReference>
<dbReference type="InterPro" id="IPR020843">
    <property type="entry name" value="PKS_ER"/>
</dbReference>
<dbReference type="InterPro" id="IPR002364">
    <property type="entry name" value="Quin_OxRdtase/zeta-crystal_CS"/>
</dbReference>
<dbReference type="InterPro" id="IPR051603">
    <property type="entry name" value="Zinc-ADH_QOR/CCCR"/>
</dbReference>
<dbReference type="PANTHER" id="PTHR44154">
    <property type="entry name" value="QUINONE OXIDOREDUCTASE"/>
    <property type="match status" value="1"/>
</dbReference>
<dbReference type="PANTHER" id="PTHR44154:SF1">
    <property type="entry name" value="QUINONE OXIDOREDUCTASE"/>
    <property type="match status" value="1"/>
</dbReference>
<dbReference type="Pfam" id="PF08240">
    <property type="entry name" value="ADH_N"/>
    <property type="match status" value="1"/>
</dbReference>
<dbReference type="Pfam" id="PF00107">
    <property type="entry name" value="ADH_zinc_N"/>
    <property type="match status" value="1"/>
</dbReference>
<dbReference type="SMART" id="SM00829">
    <property type="entry name" value="PKS_ER"/>
    <property type="match status" value="1"/>
</dbReference>
<dbReference type="SUPFAM" id="SSF50129">
    <property type="entry name" value="GroES-like"/>
    <property type="match status" value="1"/>
</dbReference>
<dbReference type="SUPFAM" id="SSF51735">
    <property type="entry name" value="NAD(P)-binding Rossmann-fold domains"/>
    <property type="match status" value="1"/>
</dbReference>
<dbReference type="PROSITE" id="PS01162">
    <property type="entry name" value="QOR_ZETA_CRYSTAL"/>
    <property type="match status" value="1"/>
</dbReference>